<sequence length="195" mass="21842">MRVGTWICLPGRPGRCRKQHDLGNCPEVPGIFKTLALSPGAPDMMQQPRVETDTIGAGEGPQQAVPWSAWVTRHGWVRWWVSHMPPSWIQWWSTSNWRQPLQRLLWGLEGILYLLLALMLCHALFTTGSHLLSSLWPVVAAVWRHLLPALLLLVLSALPALLFTASFLLLFSTLLSLVGLLTSMTHPGDTQDLDQ</sequence>
<feature type="chain" id="PRO_0000413694" description="Transmembrane protein 239">
    <location>
        <begin position="1"/>
        <end position="195"/>
    </location>
</feature>
<feature type="transmembrane region" description="Helical" evidence="1">
    <location>
        <begin position="105"/>
        <end position="125"/>
    </location>
</feature>
<feature type="transmembrane region" description="Helical" evidence="1">
    <location>
        <begin position="145"/>
        <end position="171"/>
    </location>
</feature>
<feature type="splice variant" id="VSP_053737" description="In isoform 2." evidence="2">
    <location>
        <begin position="1"/>
        <end position="43"/>
    </location>
</feature>
<gene>
    <name type="primary">TMEM239</name>
</gene>
<accession>Q8WW34</accession>
<accession>Q5JY54</accession>
<accession>Q6ZU23</accession>
<keyword id="KW-0025">Alternative splicing</keyword>
<keyword id="KW-0472">Membrane</keyword>
<keyword id="KW-1267">Proteomics identification</keyword>
<keyword id="KW-1185">Reference proteome</keyword>
<keyword id="KW-0812">Transmembrane</keyword>
<keyword id="KW-1133">Transmembrane helix</keyword>
<reference key="1">
    <citation type="journal article" date="2004" name="Nat. Genet.">
        <title>Complete sequencing and characterization of 21,243 full-length human cDNAs.</title>
        <authorList>
            <person name="Ota T."/>
            <person name="Suzuki Y."/>
            <person name="Nishikawa T."/>
            <person name="Otsuki T."/>
            <person name="Sugiyama T."/>
            <person name="Irie R."/>
            <person name="Wakamatsu A."/>
            <person name="Hayashi K."/>
            <person name="Sato H."/>
            <person name="Nagai K."/>
            <person name="Kimura K."/>
            <person name="Makita H."/>
            <person name="Sekine M."/>
            <person name="Obayashi M."/>
            <person name="Nishi T."/>
            <person name="Shibahara T."/>
            <person name="Tanaka T."/>
            <person name="Ishii S."/>
            <person name="Yamamoto J."/>
            <person name="Saito K."/>
            <person name="Kawai Y."/>
            <person name="Isono Y."/>
            <person name="Nakamura Y."/>
            <person name="Nagahari K."/>
            <person name="Murakami K."/>
            <person name="Yasuda T."/>
            <person name="Iwayanagi T."/>
            <person name="Wagatsuma M."/>
            <person name="Shiratori A."/>
            <person name="Sudo H."/>
            <person name="Hosoiri T."/>
            <person name="Kaku Y."/>
            <person name="Kodaira H."/>
            <person name="Kondo H."/>
            <person name="Sugawara M."/>
            <person name="Takahashi M."/>
            <person name="Kanda K."/>
            <person name="Yokoi T."/>
            <person name="Furuya T."/>
            <person name="Kikkawa E."/>
            <person name="Omura Y."/>
            <person name="Abe K."/>
            <person name="Kamihara K."/>
            <person name="Katsuta N."/>
            <person name="Sato K."/>
            <person name="Tanikawa M."/>
            <person name="Yamazaki M."/>
            <person name="Ninomiya K."/>
            <person name="Ishibashi T."/>
            <person name="Yamashita H."/>
            <person name="Murakawa K."/>
            <person name="Fujimori K."/>
            <person name="Tanai H."/>
            <person name="Kimata M."/>
            <person name="Watanabe M."/>
            <person name="Hiraoka S."/>
            <person name="Chiba Y."/>
            <person name="Ishida S."/>
            <person name="Ono Y."/>
            <person name="Takiguchi S."/>
            <person name="Watanabe S."/>
            <person name="Yosida M."/>
            <person name="Hotuta T."/>
            <person name="Kusano J."/>
            <person name="Kanehori K."/>
            <person name="Takahashi-Fujii A."/>
            <person name="Hara H."/>
            <person name="Tanase T.-O."/>
            <person name="Nomura Y."/>
            <person name="Togiya S."/>
            <person name="Komai F."/>
            <person name="Hara R."/>
            <person name="Takeuchi K."/>
            <person name="Arita M."/>
            <person name="Imose N."/>
            <person name="Musashino K."/>
            <person name="Yuuki H."/>
            <person name="Oshima A."/>
            <person name="Sasaki N."/>
            <person name="Aotsuka S."/>
            <person name="Yoshikawa Y."/>
            <person name="Matsunawa H."/>
            <person name="Ichihara T."/>
            <person name="Shiohata N."/>
            <person name="Sano S."/>
            <person name="Moriya S."/>
            <person name="Momiyama H."/>
            <person name="Satoh N."/>
            <person name="Takami S."/>
            <person name="Terashima Y."/>
            <person name="Suzuki O."/>
            <person name="Nakagawa S."/>
            <person name="Senoh A."/>
            <person name="Mizoguchi H."/>
            <person name="Goto Y."/>
            <person name="Shimizu F."/>
            <person name="Wakebe H."/>
            <person name="Hishigaki H."/>
            <person name="Watanabe T."/>
            <person name="Sugiyama A."/>
            <person name="Takemoto M."/>
            <person name="Kawakami B."/>
            <person name="Yamazaki M."/>
            <person name="Watanabe K."/>
            <person name="Kumagai A."/>
            <person name="Itakura S."/>
            <person name="Fukuzumi Y."/>
            <person name="Fujimori Y."/>
            <person name="Komiyama M."/>
            <person name="Tashiro H."/>
            <person name="Tanigami A."/>
            <person name="Fujiwara T."/>
            <person name="Ono T."/>
            <person name="Yamada K."/>
            <person name="Fujii Y."/>
            <person name="Ozaki K."/>
            <person name="Hirao M."/>
            <person name="Ohmori Y."/>
            <person name="Kawabata A."/>
            <person name="Hikiji T."/>
            <person name="Kobatake N."/>
            <person name="Inagaki H."/>
            <person name="Ikema Y."/>
            <person name="Okamoto S."/>
            <person name="Okitani R."/>
            <person name="Kawakami T."/>
            <person name="Noguchi S."/>
            <person name="Itoh T."/>
            <person name="Shigeta K."/>
            <person name="Senba T."/>
            <person name="Matsumura K."/>
            <person name="Nakajima Y."/>
            <person name="Mizuno T."/>
            <person name="Morinaga M."/>
            <person name="Sasaki M."/>
            <person name="Togashi T."/>
            <person name="Oyama M."/>
            <person name="Hata H."/>
            <person name="Watanabe M."/>
            <person name="Komatsu T."/>
            <person name="Mizushima-Sugano J."/>
            <person name="Satoh T."/>
            <person name="Shirai Y."/>
            <person name="Takahashi Y."/>
            <person name="Nakagawa K."/>
            <person name="Okumura K."/>
            <person name="Nagase T."/>
            <person name="Nomura N."/>
            <person name="Kikuchi H."/>
            <person name="Masuho Y."/>
            <person name="Yamashita R."/>
            <person name="Nakai K."/>
            <person name="Yada T."/>
            <person name="Nakamura Y."/>
            <person name="Ohara O."/>
            <person name="Isogai T."/>
            <person name="Sugano S."/>
        </authorList>
    </citation>
    <scope>NUCLEOTIDE SEQUENCE [LARGE SCALE MRNA] (ISOFORM 1)</scope>
    <source>
        <tissue>Testis</tissue>
    </source>
</reference>
<reference key="2">
    <citation type="journal article" date="2001" name="Nature">
        <title>The DNA sequence and comparative analysis of human chromosome 20.</title>
        <authorList>
            <person name="Deloukas P."/>
            <person name="Matthews L.H."/>
            <person name="Ashurst J.L."/>
            <person name="Burton J."/>
            <person name="Gilbert J.G.R."/>
            <person name="Jones M."/>
            <person name="Stavrides G."/>
            <person name="Almeida J.P."/>
            <person name="Babbage A.K."/>
            <person name="Bagguley C.L."/>
            <person name="Bailey J."/>
            <person name="Barlow K.F."/>
            <person name="Bates K.N."/>
            <person name="Beard L.M."/>
            <person name="Beare D.M."/>
            <person name="Beasley O.P."/>
            <person name="Bird C.P."/>
            <person name="Blakey S.E."/>
            <person name="Bridgeman A.M."/>
            <person name="Brown A.J."/>
            <person name="Buck D."/>
            <person name="Burrill W.D."/>
            <person name="Butler A.P."/>
            <person name="Carder C."/>
            <person name="Carter N.P."/>
            <person name="Chapman J.C."/>
            <person name="Clamp M."/>
            <person name="Clark G."/>
            <person name="Clark L.N."/>
            <person name="Clark S.Y."/>
            <person name="Clee C.M."/>
            <person name="Clegg S."/>
            <person name="Cobley V.E."/>
            <person name="Collier R.E."/>
            <person name="Connor R.E."/>
            <person name="Corby N.R."/>
            <person name="Coulson A."/>
            <person name="Coville G.J."/>
            <person name="Deadman R."/>
            <person name="Dhami P.D."/>
            <person name="Dunn M."/>
            <person name="Ellington A.G."/>
            <person name="Frankland J.A."/>
            <person name="Fraser A."/>
            <person name="French L."/>
            <person name="Garner P."/>
            <person name="Grafham D.V."/>
            <person name="Griffiths C."/>
            <person name="Griffiths M.N.D."/>
            <person name="Gwilliam R."/>
            <person name="Hall R.E."/>
            <person name="Hammond S."/>
            <person name="Harley J.L."/>
            <person name="Heath P.D."/>
            <person name="Ho S."/>
            <person name="Holden J.L."/>
            <person name="Howden P.J."/>
            <person name="Huckle E."/>
            <person name="Hunt A.R."/>
            <person name="Hunt S.E."/>
            <person name="Jekosch K."/>
            <person name="Johnson C.M."/>
            <person name="Johnson D."/>
            <person name="Kay M.P."/>
            <person name="Kimberley A.M."/>
            <person name="King A."/>
            <person name="Knights A."/>
            <person name="Laird G.K."/>
            <person name="Lawlor S."/>
            <person name="Lehvaeslaiho M.H."/>
            <person name="Leversha M.A."/>
            <person name="Lloyd C."/>
            <person name="Lloyd D.M."/>
            <person name="Lovell J.D."/>
            <person name="Marsh V.L."/>
            <person name="Martin S.L."/>
            <person name="McConnachie L.J."/>
            <person name="McLay K."/>
            <person name="McMurray A.A."/>
            <person name="Milne S.A."/>
            <person name="Mistry D."/>
            <person name="Moore M.J.F."/>
            <person name="Mullikin J.C."/>
            <person name="Nickerson T."/>
            <person name="Oliver K."/>
            <person name="Parker A."/>
            <person name="Patel R."/>
            <person name="Pearce T.A.V."/>
            <person name="Peck A.I."/>
            <person name="Phillimore B.J.C.T."/>
            <person name="Prathalingam S.R."/>
            <person name="Plumb R.W."/>
            <person name="Ramsay H."/>
            <person name="Rice C.M."/>
            <person name="Ross M.T."/>
            <person name="Scott C.E."/>
            <person name="Sehra H.K."/>
            <person name="Shownkeen R."/>
            <person name="Sims S."/>
            <person name="Skuce C.D."/>
            <person name="Smith M.L."/>
            <person name="Soderlund C."/>
            <person name="Steward C.A."/>
            <person name="Sulston J.E."/>
            <person name="Swann R.M."/>
            <person name="Sycamore N."/>
            <person name="Taylor R."/>
            <person name="Tee L."/>
            <person name="Thomas D.W."/>
            <person name="Thorpe A."/>
            <person name="Tracey A."/>
            <person name="Tromans A.C."/>
            <person name="Vaudin M."/>
            <person name="Wall M."/>
            <person name="Wallis J.M."/>
            <person name="Whitehead S.L."/>
            <person name="Whittaker P."/>
            <person name="Willey D.L."/>
            <person name="Williams L."/>
            <person name="Williams S.A."/>
            <person name="Wilming L."/>
            <person name="Wray P.W."/>
            <person name="Hubbard T."/>
            <person name="Durbin R.M."/>
            <person name="Bentley D.R."/>
            <person name="Beck S."/>
            <person name="Rogers J."/>
        </authorList>
    </citation>
    <scope>NUCLEOTIDE SEQUENCE [LARGE SCALE GENOMIC DNA]</scope>
</reference>
<reference key="3">
    <citation type="submission" date="2005-07" db="EMBL/GenBank/DDBJ databases">
        <authorList>
            <person name="Mural R.J."/>
            <person name="Istrail S."/>
            <person name="Sutton G.G."/>
            <person name="Florea L."/>
            <person name="Halpern A.L."/>
            <person name="Mobarry C.M."/>
            <person name="Lippert R."/>
            <person name="Walenz B."/>
            <person name="Shatkay H."/>
            <person name="Dew I."/>
            <person name="Miller J.R."/>
            <person name="Flanigan M.J."/>
            <person name="Edwards N.J."/>
            <person name="Bolanos R."/>
            <person name="Fasulo D."/>
            <person name="Halldorsson B.V."/>
            <person name="Hannenhalli S."/>
            <person name="Turner R."/>
            <person name="Yooseph S."/>
            <person name="Lu F."/>
            <person name="Nusskern D.R."/>
            <person name="Shue B.C."/>
            <person name="Zheng X.H."/>
            <person name="Zhong F."/>
            <person name="Delcher A.L."/>
            <person name="Huson D.H."/>
            <person name="Kravitz S.A."/>
            <person name="Mouchard L."/>
            <person name="Reinert K."/>
            <person name="Remington K.A."/>
            <person name="Clark A.G."/>
            <person name="Waterman M.S."/>
            <person name="Eichler E.E."/>
            <person name="Adams M.D."/>
            <person name="Hunkapiller M.W."/>
            <person name="Myers E.W."/>
            <person name="Venter J.C."/>
        </authorList>
    </citation>
    <scope>NUCLEOTIDE SEQUENCE [LARGE SCALE GENOMIC DNA]</scope>
</reference>
<reference key="4">
    <citation type="journal article" date="2004" name="Genome Res.">
        <title>The status, quality, and expansion of the NIH full-length cDNA project: the Mammalian Gene Collection (MGC).</title>
        <authorList>
            <consortium name="The MGC Project Team"/>
        </authorList>
    </citation>
    <scope>NUCLEOTIDE SEQUENCE [LARGE SCALE MRNA] (ISOFORM 2)</scope>
    <source>
        <tissue>Testis</tissue>
    </source>
</reference>
<protein>
    <recommendedName>
        <fullName>Transmembrane protein 239</fullName>
    </recommendedName>
</protein>
<organism>
    <name type="scientific">Homo sapiens</name>
    <name type="common">Human</name>
    <dbReference type="NCBI Taxonomy" id="9606"/>
    <lineage>
        <taxon>Eukaryota</taxon>
        <taxon>Metazoa</taxon>
        <taxon>Chordata</taxon>
        <taxon>Craniata</taxon>
        <taxon>Vertebrata</taxon>
        <taxon>Euteleostomi</taxon>
        <taxon>Mammalia</taxon>
        <taxon>Eutheria</taxon>
        <taxon>Euarchontoglires</taxon>
        <taxon>Primates</taxon>
        <taxon>Haplorrhini</taxon>
        <taxon>Catarrhini</taxon>
        <taxon>Hominidae</taxon>
        <taxon>Homo</taxon>
    </lineage>
</organism>
<proteinExistence type="evidence at protein level"/>
<evidence type="ECO:0000255" key="1"/>
<evidence type="ECO:0000303" key="2">
    <source>
    </source>
</evidence>
<evidence type="ECO:0000305" key="3"/>
<name>TM239_HUMAN</name>
<comment type="interaction">
    <interactant intactId="EBI-9675724">
        <id>Q8WW34</id>
    </interactant>
    <interactant intactId="EBI-765623">
        <id>P17544</id>
        <label>ATF7</label>
    </interactant>
    <organismsDiffer>false</organismsDiffer>
    <experiments>3</experiments>
</comment>
<comment type="interaction">
    <interactant intactId="EBI-9675724">
        <id>Q8WW34</id>
    </interactant>
    <interactant intactId="EBI-745535">
        <id>Q8NI60</id>
        <label>COQ8A</label>
    </interactant>
    <organismsDiffer>false</organismsDiffer>
    <experiments>5</experiments>
</comment>
<comment type="interaction">
    <interactant intactId="EBI-9675724">
        <id>Q8WW34</id>
    </interactant>
    <interactant intactId="EBI-1057190">
        <id>Q7Z6J4</id>
        <label>FGD2</label>
    </interactant>
    <organismsDiffer>false</organismsDiffer>
    <experiments>3</experiments>
</comment>
<comment type="interaction">
    <interactant intactId="EBI-9675724">
        <id>Q8WW34</id>
    </interactant>
    <interactant intactId="EBI-726510">
        <id>Q96BZ8</id>
        <label>LENG1</label>
    </interactant>
    <organismsDiffer>false</organismsDiffer>
    <experiments>3</experiments>
</comment>
<comment type="interaction">
    <interactant intactId="EBI-9675724">
        <id>Q8WW34</id>
    </interactant>
    <interactant intactId="EBI-709754">
        <id>Q9HB07</id>
        <label>MYG1</label>
    </interactant>
    <organismsDiffer>false</organismsDiffer>
    <experiments>3</experiments>
</comment>
<comment type="interaction">
    <interactant intactId="EBI-9675724">
        <id>Q8WW34</id>
    </interactant>
    <interactant intactId="EBI-741158">
        <id>Q96HA8</id>
        <label>NTAQ1</label>
    </interactant>
    <organismsDiffer>false</organismsDiffer>
    <experiments>3</experiments>
</comment>
<comment type="interaction">
    <interactant intactId="EBI-9675724">
        <id>Q8WW34</id>
    </interactant>
    <interactant intactId="EBI-741774">
        <id>Q9UNA4</id>
        <label>POLI</label>
    </interactant>
    <organismsDiffer>false</organismsDiffer>
    <experiments>3</experiments>
</comment>
<comment type="interaction">
    <interactant intactId="EBI-9675724">
        <id>Q8WW34</id>
    </interactant>
    <interactant intactId="EBI-727004">
        <id>O00560</id>
        <label>SDCBP</label>
    </interactant>
    <organismsDiffer>false</organismsDiffer>
    <experiments>3</experiments>
</comment>
<comment type="interaction">
    <interactant intactId="EBI-9675724">
        <id>Q8WW34</id>
    </interactant>
    <interactant intactId="EBI-714881">
        <id>Q9HC62</id>
        <label>SENP2</label>
    </interactant>
    <organismsDiffer>false</organismsDiffer>
    <experiments>3</experiments>
</comment>
<comment type="interaction">
    <interactant intactId="EBI-9675724">
        <id>Q8WW34</id>
    </interactant>
    <interactant intactId="EBI-741277">
        <id>P45974</id>
        <label>USP5</label>
    </interactant>
    <organismsDiffer>false</organismsDiffer>
    <experiments>3</experiments>
</comment>
<comment type="interaction">
    <interactant intactId="EBI-11528917">
        <id>Q8WW34-2</id>
    </interactant>
    <interactant intactId="EBI-13059134">
        <id>Q13520</id>
        <label>AQP6</label>
    </interactant>
    <organismsDiffer>false</organismsDiffer>
    <experiments>3</experiments>
</comment>
<comment type="interaction">
    <interactant intactId="EBI-11528917">
        <id>Q8WW34-2</id>
    </interactant>
    <interactant intactId="EBI-7797864">
        <id>P11912</id>
        <label>CD79A</label>
    </interactant>
    <organismsDiffer>false</organismsDiffer>
    <experiments>3</experiments>
</comment>
<comment type="interaction">
    <interactant intactId="EBI-11528917">
        <id>Q8WW34-2</id>
    </interactant>
    <interactant intactId="EBI-23801559">
        <id>P56880</id>
        <label>CLDN20</label>
    </interactant>
    <organismsDiffer>false</organismsDiffer>
    <experiments>3</experiments>
</comment>
<comment type="interaction">
    <interactant intactId="EBI-11528917">
        <id>Q8WW34-2</id>
    </interactant>
    <interactant intactId="EBI-17274839">
        <id>P58418</id>
        <label>CLRN1</label>
    </interactant>
    <organismsDiffer>false</organismsDiffer>
    <experiments>3</experiments>
</comment>
<comment type="interaction">
    <interactant intactId="EBI-11528917">
        <id>Q8WW34-2</id>
    </interactant>
    <interactant intactId="EBI-745535">
        <id>Q8NI60</id>
        <label>COQ8A</label>
    </interactant>
    <organismsDiffer>false</organismsDiffer>
    <experiments>3</experiments>
</comment>
<comment type="interaction">
    <interactant intactId="EBI-11528917">
        <id>Q8WW34-2</id>
    </interactant>
    <interactant intactId="EBI-6942903">
        <id>Q96BA8</id>
        <label>CREB3L1</label>
    </interactant>
    <organismsDiffer>false</organismsDiffer>
    <experiments>3</experiments>
</comment>
<comment type="interaction">
    <interactant intactId="EBI-11528917">
        <id>Q8WW34-2</id>
    </interactant>
    <interactant intactId="EBI-852194">
        <id>Q68CJ9</id>
        <label>CREB3L3</label>
    </interactant>
    <organismsDiffer>false</organismsDiffer>
    <experiments>3</experiments>
</comment>
<comment type="interaction">
    <interactant intactId="EBI-11528917">
        <id>Q8WW34-2</id>
    </interactant>
    <interactant intactId="EBI-3917045">
        <id>Q6PI48</id>
        <label>DARS2</label>
    </interactant>
    <organismsDiffer>false</organismsDiffer>
    <experiments>3</experiments>
</comment>
<comment type="interaction">
    <interactant intactId="EBI-11528917">
        <id>Q8WW34-2</id>
    </interactant>
    <interactant intactId="EBI-740086">
        <id>Q96GG9</id>
        <label>DCUN1D1</label>
    </interactant>
    <organismsDiffer>false</organismsDiffer>
    <experiments>3</experiments>
</comment>
<comment type="interaction">
    <interactant intactId="EBI-11528917">
        <id>Q8WW34-2</id>
    </interactant>
    <interactant intactId="EBI-3915253">
        <id>Q15125</id>
        <label>EBP</label>
    </interactant>
    <organismsDiffer>false</organismsDiffer>
    <experiments>3</experiments>
</comment>
<comment type="interaction">
    <interactant intactId="EBI-11528917">
        <id>Q8WW34-2</id>
    </interactant>
    <interactant intactId="EBI-4319440">
        <id>P54849</id>
        <label>EMP1</label>
    </interactant>
    <organismsDiffer>false</organismsDiffer>
    <experiments>3</experiments>
</comment>
<comment type="interaction">
    <interactant intactId="EBI-11528917">
        <id>Q8WW34-2</id>
    </interactant>
    <interactant intactId="EBI-18636064">
        <id>Q8TBP5</id>
        <label>FAM174A</label>
    </interactant>
    <organismsDiffer>false</organismsDiffer>
    <experiments>3</experiments>
</comment>
<comment type="interaction">
    <interactant intactId="EBI-11528917">
        <id>Q8WW34-2</id>
    </interactant>
    <interactant intactId="EBI-11959077">
        <id>Q6PCT2-2</id>
        <label>FBXL19</label>
    </interactant>
    <organismsDiffer>false</organismsDiffer>
    <experiments>3</experiments>
</comment>
<comment type="interaction">
    <interactant intactId="EBI-11528917">
        <id>Q8WW34-2</id>
    </interactant>
    <interactant intactId="EBI-2833872">
        <id>O15552</id>
        <label>FFAR2</label>
    </interactant>
    <organismsDiffer>false</organismsDiffer>
    <experiments>3</experiments>
</comment>
<comment type="interaction">
    <interactant intactId="EBI-11528917">
        <id>Q8WW34-2</id>
    </interactant>
    <interactant intactId="EBI-3918971">
        <id>Q9Y680</id>
        <label>FKBP7</label>
    </interactant>
    <organismsDiffer>false</organismsDiffer>
    <experiments>3</experiments>
</comment>
<comment type="interaction">
    <interactant intactId="EBI-11528917">
        <id>Q8WW34-2</id>
    </interactant>
    <interactant intactId="EBI-12156897">
        <id>Q9BXU8</id>
        <label>FTHL17</label>
    </interactant>
    <organismsDiffer>false</organismsDiffer>
    <experiments>3</experiments>
</comment>
<comment type="interaction">
    <interactant intactId="EBI-11528917">
        <id>Q8WW34-2</id>
    </interactant>
    <interactant intactId="EBI-713304">
        <id>Q9H0Q3</id>
        <label>FXYD6</label>
    </interactant>
    <organismsDiffer>false</organismsDiffer>
    <experiments>3</experiments>
</comment>
<comment type="interaction">
    <interactant intactId="EBI-11528917">
        <id>Q8WW34-2</id>
    </interactant>
    <interactant intactId="EBI-17458373">
        <id>P48165</id>
        <label>GJA8</label>
    </interactant>
    <organismsDiffer>false</organismsDiffer>
    <experiments>3</experiments>
</comment>
<comment type="interaction">
    <interactant intactId="EBI-11528917">
        <id>Q8WW34-2</id>
    </interactant>
    <interactant intactId="EBI-17935713">
        <id>Q96P66</id>
        <label>GPR101</label>
    </interactant>
    <organismsDiffer>false</organismsDiffer>
    <experiments>3</experiments>
</comment>
<comment type="interaction">
    <interactant intactId="EBI-11528917">
        <id>Q8WW34-2</id>
    </interactant>
    <interactant intactId="EBI-11955647">
        <id>Q8TDV0</id>
        <label>GPR151</label>
    </interactant>
    <organismsDiffer>false</organismsDiffer>
    <experiments>3</experiments>
</comment>
<comment type="interaction">
    <interactant intactId="EBI-11528917">
        <id>Q8WW34-2</id>
    </interactant>
    <interactant intactId="EBI-18076404">
        <id>O15529</id>
        <label>GPR42</label>
    </interactant>
    <organismsDiffer>false</organismsDiffer>
    <experiments>3</experiments>
</comment>
<comment type="interaction">
    <interactant intactId="EBI-11528917">
        <id>Q8WW34-2</id>
    </interactant>
    <interactant intactId="EBI-466029">
        <id>P42858</id>
        <label>HTT</label>
    </interactant>
    <organismsDiffer>false</organismsDiffer>
    <experiments>3</experiments>
</comment>
<comment type="interaction">
    <interactant intactId="EBI-11528917">
        <id>Q8WW34-2</id>
    </interactant>
    <interactant intactId="EBI-739832">
        <id>Q8TBB1</id>
        <label>LNX1</label>
    </interactant>
    <organismsDiffer>false</organismsDiffer>
    <experiments>3</experiments>
</comment>
<comment type="interaction">
    <interactant intactId="EBI-11528917">
        <id>Q8WW34-2</id>
    </interactant>
    <interactant intactId="EBI-373355">
        <id>Q5SR56</id>
        <label>MFSD14B</label>
    </interactant>
    <organismsDiffer>false</organismsDiffer>
    <experiments>3</experiments>
</comment>
<comment type="interaction">
    <interactant intactId="EBI-11528917">
        <id>Q8WW34-2</id>
    </interactant>
    <interactant intactId="EBI-11988931">
        <id>Q96C03-3</id>
        <label>MIEF2</label>
    </interactant>
    <organismsDiffer>false</organismsDiffer>
    <experiments>3</experiments>
</comment>
<comment type="interaction">
    <interactant intactId="EBI-11528917">
        <id>Q8WW34-2</id>
    </interactant>
    <interactant intactId="EBI-711788">
        <id>Q00013</id>
        <label>MPP1</label>
    </interactant>
    <organismsDiffer>false</organismsDiffer>
    <experiments>3</experiments>
</comment>
<comment type="interaction">
    <interactant intactId="EBI-11528917">
        <id>Q8WW34-2</id>
    </interactant>
    <interactant intactId="EBI-12806656">
        <id>Q96HJ5</id>
        <label>MS4A3</label>
    </interactant>
    <organismsDiffer>false</organismsDiffer>
    <experiments>3</experiments>
</comment>
<comment type="interaction">
    <interactant intactId="EBI-11528917">
        <id>Q8WW34-2</id>
    </interactant>
    <interactant intactId="EBI-3923617">
        <id>Q9H2K0</id>
        <label>MTIF3</label>
    </interactant>
    <organismsDiffer>false</organismsDiffer>
    <experiments>3</experiments>
</comment>
<comment type="interaction">
    <interactant intactId="EBI-11528917">
        <id>Q8WW34-2</id>
    </interactant>
    <interactant intactId="EBI-11980301">
        <id>Q8N3F0</id>
        <label>MTURN</label>
    </interactant>
    <organismsDiffer>false</organismsDiffer>
    <experiments>3</experiments>
</comment>
<comment type="interaction">
    <interactant intactId="EBI-11528917">
        <id>Q8WW34-2</id>
    </interactant>
    <interactant intactId="EBI-2683029">
        <id>Q9NX40</id>
        <label>OCIAD1</label>
    </interactant>
    <organismsDiffer>false</organismsDiffer>
    <experiments>3</experiments>
</comment>
<comment type="interaction">
    <interactant intactId="EBI-11528917">
        <id>Q8WW34-2</id>
    </interactant>
    <interactant intactId="EBI-12382569">
        <id>Q2M2E3</id>
        <label>ODF4</label>
    </interactant>
    <organismsDiffer>false</organismsDiffer>
    <experiments>3</experiments>
</comment>
<comment type="interaction">
    <interactant intactId="EBI-11528917">
        <id>Q8WW34-2</id>
    </interactant>
    <interactant intactId="EBI-750730">
        <id>Q96BN8</id>
        <label>OTULIN</label>
    </interactant>
    <organismsDiffer>false</organismsDiffer>
    <experiments>3</experiments>
</comment>
<comment type="interaction">
    <interactant intactId="EBI-11528917">
        <id>Q8WW34-2</id>
    </interactant>
    <interactant intactId="EBI-16427978">
        <id>Q9BQ51</id>
        <label>PDCD1LG2</label>
    </interactant>
    <organismsDiffer>false</organismsDiffer>
    <experiments>3</experiments>
</comment>
<comment type="interaction">
    <interactant intactId="EBI-11528917">
        <id>Q8WW34-2</id>
    </interactant>
    <interactant intactId="EBI-1045072">
        <id>Q96T60</id>
        <label>PNKP</label>
    </interactant>
    <organismsDiffer>false</organismsDiffer>
    <experiments>3</experiments>
</comment>
<comment type="interaction">
    <interactant intactId="EBI-11528917">
        <id>Q8WW34-2</id>
    </interactant>
    <interactant intactId="EBI-11337973">
        <id>Q9BRK0</id>
        <label>REEP2</label>
    </interactant>
    <organismsDiffer>false</organismsDiffer>
    <experiments>3</experiments>
</comment>
<comment type="interaction">
    <interactant intactId="EBI-11528917">
        <id>Q8WW34-2</id>
    </interactant>
    <interactant intactId="EBI-10192441">
        <id>Q86VR2</id>
        <label>RETREG3</label>
    </interactant>
    <organismsDiffer>false</organismsDiffer>
    <experiments>3</experiments>
</comment>
<comment type="interaction">
    <interactant intactId="EBI-11528917">
        <id>Q8WW34-2</id>
    </interactant>
    <interactant intactId="EBI-16432654">
        <id>A8MRB1</id>
        <label>S100B</label>
    </interactant>
    <organismsDiffer>false</organismsDiffer>
    <experiments>3</experiments>
</comment>
<comment type="interaction">
    <interactant intactId="EBI-11528917">
        <id>Q8WW34-2</id>
    </interactant>
    <interactant intactId="EBI-745846">
        <id>P57086</id>
        <label>SCAND1</label>
    </interactant>
    <organismsDiffer>false</organismsDiffer>
    <experiments>3</experiments>
</comment>
<comment type="interaction">
    <interactant intactId="EBI-11528917">
        <id>Q8WW34-2</id>
    </interactant>
    <interactant intactId="EBI-17247926">
        <id>Q9NY72</id>
        <label>SCN3B</label>
    </interactant>
    <organismsDiffer>false</organismsDiffer>
    <experiments>3</experiments>
</comment>
<comment type="interaction">
    <interactant intactId="EBI-11528917">
        <id>Q8WW34-2</id>
    </interactant>
    <interactant intactId="EBI-727004">
        <id>O00560</id>
        <label>SDCBP</label>
    </interactant>
    <organismsDiffer>false</organismsDiffer>
    <experiments>3</experiments>
</comment>
<comment type="interaction">
    <interactant intactId="EBI-11528917">
        <id>Q8WW34-2</id>
    </interactant>
    <interactant intactId="EBI-714881">
        <id>Q9HC62</id>
        <label>SENP2</label>
    </interactant>
    <organismsDiffer>false</organismsDiffer>
    <experiments>3</experiments>
</comment>
<comment type="interaction">
    <interactant intactId="EBI-11528917">
        <id>Q8WW34-2</id>
    </interactant>
    <interactant intactId="EBI-3923031">
        <id>Q14973</id>
        <label>SLC10A1</label>
    </interactant>
    <organismsDiffer>false</organismsDiffer>
    <experiments>3</experiments>
</comment>
<comment type="interaction">
    <interactant intactId="EBI-11528917">
        <id>Q8WW34-2</id>
    </interactant>
    <interactant intactId="EBI-18159983">
        <id>Q3KNW5</id>
        <label>SLC10A6</label>
    </interactant>
    <organismsDiffer>false</organismsDiffer>
    <experiments>3</experiments>
</comment>
<comment type="interaction">
    <interactant intactId="EBI-11528917">
        <id>Q8WW34-2</id>
    </interactant>
    <interactant intactId="EBI-17595455">
        <id>P54219-3</id>
        <label>SLC18A1</label>
    </interactant>
    <organismsDiffer>false</organismsDiffer>
    <experiments>3</experiments>
</comment>
<comment type="interaction">
    <interactant intactId="EBI-11528917">
        <id>Q8WW34-2</id>
    </interactant>
    <interactant intactId="EBI-12811757">
        <id>O95436-2</id>
        <label>SLC34A2</label>
    </interactant>
    <organismsDiffer>false</organismsDiffer>
    <experiments>3</experiments>
</comment>
<comment type="interaction">
    <interactant intactId="EBI-11528917">
        <id>Q8WW34-2</id>
    </interactant>
    <interactant intactId="EBI-17295964">
        <id>Q9NQQ7-3</id>
        <label>SLC35C2</label>
    </interactant>
    <organismsDiffer>false</organismsDiffer>
    <experiments>3</experiments>
</comment>
<comment type="interaction">
    <interactant intactId="EBI-11528917">
        <id>Q8WW34-2</id>
    </interactant>
    <interactant intactId="EBI-2822329">
        <id>Q13596</id>
        <label>SNX1</label>
    </interactant>
    <organismsDiffer>false</organismsDiffer>
    <experiments>3</experiments>
</comment>
<comment type="interaction">
    <interactant intactId="EBI-11528917">
        <id>Q8WW34-2</id>
    </interactant>
    <interactant intactId="EBI-1046690">
        <id>O60749</id>
        <label>SNX2</label>
    </interactant>
    <organismsDiffer>false</organismsDiffer>
    <experiments>3</experiments>
</comment>
<comment type="interaction">
    <interactant intactId="EBI-11528917">
        <id>Q8WW34-2</id>
    </interactant>
    <interactant intactId="EBI-742688">
        <id>Q9NZD8</id>
        <label>SPG21</label>
    </interactant>
    <organismsDiffer>false</organismsDiffer>
    <experiments>3</experiments>
</comment>
<comment type="interaction">
    <interactant intactId="EBI-11528917">
        <id>Q8WW34-2</id>
    </interactant>
    <interactant intactId="EBI-17280858">
        <id>Q8WWF3</id>
        <label>SSMEM1</label>
    </interactant>
    <organismsDiffer>false</organismsDiffer>
    <experiments>3</experiments>
</comment>
<comment type="interaction">
    <interactant intactId="EBI-11528917">
        <id>Q8WW34-2</id>
    </interactant>
    <interactant intactId="EBI-10238936">
        <id>Q17RD7</id>
        <label>SYT16</label>
    </interactant>
    <organismsDiffer>false</organismsDiffer>
    <experiments>3</experiments>
</comment>
<comment type="interaction">
    <interactant intactId="EBI-11528917">
        <id>Q8WW34-2</id>
    </interactant>
    <interactant intactId="EBI-702328">
        <id>Q969Z0</id>
        <label>TBRG4</label>
    </interactant>
    <organismsDiffer>false</organismsDiffer>
    <experiments>3</experiments>
</comment>
<comment type="interaction">
    <interactant intactId="EBI-11528917">
        <id>Q8WW34-2</id>
    </interactant>
    <interactant intactId="EBI-6268651">
        <id>Q9NPL8</id>
        <label>TIMMDC1</label>
    </interactant>
    <organismsDiffer>false</organismsDiffer>
    <experiments>3</experiments>
</comment>
<comment type="interaction">
    <interactant intactId="EBI-11528917">
        <id>Q8WW34-2</id>
    </interactant>
    <interactant intactId="EBI-10314986">
        <id>Q9NWD8</id>
        <label>TMEM248</label>
    </interactant>
    <organismsDiffer>false</organismsDiffer>
    <experiments>3</experiments>
</comment>
<comment type="interaction">
    <interactant intactId="EBI-11528917">
        <id>Q8WW34-2</id>
    </interactant>
    <interactant intactId="EBI-6447886">
        <id>Q9Y320</id>
        <label>TMX2</label>
    </interactant>
    <organismsDiffer>false</organismsDiffer>
    <experiments>3</experiments>
</comment>
<comment type="interaction">
    <interactant intactId="EBI-11528917">
        <id>Q8WW34-2</id>
    </interactant>
    <interactant intactId="EBI-18055230">
        <id>P34981</id>
        <label>TRHR</label>
    </interactant>
    <organismsDiffer>false</organismsDiffer>
    <experiments>3</experiments>
</comment>
<comment type="interaction">
    <interactant intactId="EBI-11528917">
        <id>Q8WW34-2</id>
    </interactant>
    <interactant intactId="EBI-7353612">
        <id>P57075-2</id>
        <label>UBASH3A</label>
    </interactant>
    <organismsDiffer>false</organismsDiffer>
    <experiments>3</experiments>
</comment>
<comment type="interaction">
    <interactant intactId="EBI-11528917">
        <id>Q8WW34-2</id>
    </interactant>
    <interactant intactId="EBI-12072186">
        <id>P45974-2</id>
        <label>USP5</label>
    </interactant>
    <organismsDiffer>false</organismsDiffer>
    <experiments>3</experiments>
</comment>
<comment type="subcellular location">
    <subcellularLocation>
        <location evidence="3">Membrane</location>
        <topology evidence="3">Multi-pass membrane protein</topology>
    </subcellularLocation>
</comment>
<comment type="alternative products">
    <event type="alternative splicing"/>
    <isoform>
        <id>Q8WW34-1</id>
        <name>1</name>
        <sequence type="displayed"/>
    </isoform>
    <isoform>
        <id>Q8WW34-2</id>
        <name>2</name>
        <sequence type="described" ref="VSP_053737"/>
    </isoform>
</comment>
<comment type="sequence caution" evidence="3">
    <conflict type="erroneous initiation">
        <sequence resource="EMBL-CDS" id="AAH21178"/>
    </conflict>
    <text>Truncated N-terminus.</text>
</comment>
<dbReference type="EMBL" id="AK126033">
    <property type="protein sequence ID" value="BAC86404.1"/>
    <property type="molecule type" value="mRNA"/>
</dbReference>
<dbReference type="EMBL" id="AL035460">
    <property type="status" value="NOT_ANNOTATED_CDS"/>
    <property type="molecule type" value="Genomic_DNA"/>
</dbReference>
<dbReference type="EMBL" id="AL161656">
    <property type="status" value="NOT_ANNOTATED_CDS"/>
    <property type="molecule type" value="Genomic_DNA"/>
</dbReference>
<dbReference type="EMBL" id="CH471133">
    <property type="protein sequence ID" value="EAX10573.1"/>
    <property type="molecule type" value="Genomic_DNA"/>
</dbReference>
<dbReference type="EMBL" id="BC021178">
    <property type="protein sequence ID" value="AAH21178.1"/>
    <property type="status" value="ALT_INIT"/>
    <property type="molecule type" value="mRNA"/>
</dbReference>
<dbReference type="CCDS" id="CCDS54444.1">
    <molecule id="Q8WW34-2"/>
</dbReference>
<dbReference type="CCDS" id="CCDS82595.1">
    <molecule id="Q8WW34-1"/>
</dbReference>
<dbReference type="RefSeq" id="NP_001161142.1">
    <molecule id="Q8WW34-2"/>
    <property type="nucleotide sequence ID" value="NM_001167670.3"/>
</dbReference>
<dbReference type="RefSeq" id="NP_001305136.1">
    <molecule id="Q8WW34-1"/>
    <property type="nucleotide sequence ID" value="NM_001318207.1"/>
</dbReference>
<dbReference type="RefSeq" id="XP_011527431.1">
    <property type="nucleotide sequence ID" value="XM_011529129.2"/>
</dbReference>
<dbReference type="RefSeq" id="XP_047295770.1">
    <molecule id="Q8WW34-2"/>
    <property type="nucleotide sequence ID" value="XM_047439814.1"/>
</dbReference>
<dbReference type="BioGRID" id="940453">
    <property type="interactions" value="72"/>
</dbReference>
<dbReference type="IntAct" id="Q8WW34">
    <property type="interactions" value="65"/>
</dbReference>
<dbReference type="MINT" id="Q8WW34"/>
<dbReference type="STRING" id="9606.ENSP00000354312"/>
<dbReference type="iPTMnet" id="Q8WW34"/>
<dbReference type="PhosphoSitePlus" id="Q8WW34"/>
<dbReference type="BioMuta" id="TMEM239"/>
<dbReference type="DMDM" id="353558900"/>
<dbReference type="MassIVE" id="Q8WW34"/>
<dbReference type="PaxDb" id="9606-ENSP00000369959"/>
<dbReference type="PeptideAtlas" id="Q8WW34"/>
<dbReference type="ProteomicsDB" id="68307"/>
<dbReference type="ProteomicsDB" id="74855">
    <molecule id="Q8WW34-1"/>
</dbReference>
<dbReference type="Antibodypedia" id="74574">
    <property type="antibodies" value="4 antibodies from 4 providers"/>
</dbReference>
<dbReference type="DNASU" id="100288797"/>
<dbReference type="Ensembl" id="ENST00000361033.1">
    <molecule id="Q8WW34-1"/>
    <property type="protein sequence ID" value="ENSP00000354312.1"/>
    <property type="gene ID" value="ENSG00000198326.10"/>
</dbReference>
<dbReference type="Ensembl" id="ENST00000380585.2">
    <molecule id="Q8WW34-2"/>
    <property type="protein sequence ID" value="ENSP00000369959.1"/>
    <property type="gene ID" value="ENSG00000198326.10"/>
</dbReference>
<dbReference type="GeneID" id="100288797"/>
<dbReference type="KEGG" id="hsa:100288797"/>
<dbReference type="MANE-Select" id="ENST00000380585.2">
    <molecule id="Q8WW34-2"/>
    <property type="protein sequence ID" value="ENSP00000369959.1"/>
    <property type="RefSeq nucleotide sequence ID" value="NM_001167670.3"/>
    <property type="RefSeq protein sequence ID" value="NP_001161142.1"/>
</dbReference>
<dbReference type="UCSC" id="uc002wgx.3">
    <molecule id="Q8WW34-1"/>
    <property type="organism name" value="human"/>
</dbReference>
<dbReference type="AGR" id="HGNC:40044"/>
<dbReference type="CTD" id="100288797"/>
<dbReference type="DisGeNET" id="100288797"/>
<dbReference type="GeneCards" id="TMEM239"/>
<dbReference type="HGNC" id="HGNC:40044">
    <property type="gene designation" value="TMEM239"/>
</dbReference>
<dbReference type="HPA" id="ENSG00000198326">
    <property type="expression patterns" value="Tissue enriched (testis)"/>
</dbReference>
<dbReference type="neXtProt" id="NX_Q8WW34"/>
<dbReference type="OpenTargets" id="ENSG00000198326"/>
<dbReference type="VEuPathDB" id="HostDB:ENSG00000198326"/>
<dbReference type="eggNOG" id="ENOG502R18E">
    <property type="taxonomic scope" value="Eukaryota"/>
</dbReference>
<dbReference type="GeneTree" id="ENSGT00390000005090"/>
<dbReference type="HOGENOM" id="CLU_125766_0_0_1"/>
<dbReference type="InParanoid" id="Q8WW34"/>
<dbReference type="OMA" id="RWCMCHV"/>
<dbReference type="OrthoDB" id="9451631at2759"/>
<dbReference type="PAN-GO" id="Q8WW34">
    <property type="GO annotations" value="0 GO annotations based on evolutionary models"/>
</dbReference>
<dbReference type="PhylomeDB" id="Q8WW34"/>
<dbReference type="TreeFam" id="TF337840"/>
<dbReference type="PathwayCommons" id="Q8WW34"/>
<dbReference type="SignaLink" id="Q8WW34"/>
<dbReference type="BioGRID-ORCS" id="100288797">
    <property type="hits" value="12 hits in 1133 CRISPR screens"/>
</dbReference>
<dbReference type="GenomeRNAi" id="100288797"/>
<dbReference type="Pharos" id="Q8WW34">
    <property type="development level" value="Tdark"/>
</dbReference>
<dbReference type="PRO" id="PR:Q8WW34"/>
<dbReference type="Proteomes" id="UP000005640">
    <property type="component" value="Chromosome 20"/>
</dbReference>
<dbReference type="RNAct" id="Q8WW34">
    <property type="molecule type" value="protein"/>
</dbReference>
<dbReference type="Bgee" id="ENSG00000198326">
    <property type="expression patterns" value="Expressed in right testis and 31 other cell types or tissues"/>
</dbReference>
<dbReference type="GO" id="GO:0016020">
    <property type="term" value="C:membrane"/>
    <property type="evidence" value="ECO:0007669"/>
    <property type="project" value="UniProtKB-SubCell"/>
</dbReference>
<dbReference type="InterPro" id="IPR031694">
    <property type="entry name" value="TMEM239"/>
</dbReference>
<dbReference type="PANTHER" id="PTHR37356">
    <property type="entry name" value="TRANSMEMBRANE PROTEIN 239"/>
    <property type="match status" value="1"/>
</dbReference>
<dbReference type="PANTHER" id="PTHR37356:SF1">
    <property type="entry name" value="TRANSMEMBRANE PROTEIN 239"/>
    <property type="match status" value="1"/>
</dbReference>
<dbReference type="Pfam" id="PF15841">
    <property type="entry name" value="TMEM239"/>
    <property type="match status" value="1"/>
</dbReference>